<name>WZYE_ECO24</name>
<organism>
    <name type="scientific">Escherichia coli O139:H28 (strain E24377A / ETEC)</name>
    <dbReference type="NCBI Taxonomy" id="331111"/>
    <lineage>
        <taxon>Bacteria</taxon>
        <taxon>Pseudomonadati</taxon>
        <taxon>Pseudomonadota</taxon>
        <taxon>Gammaproteobacteria</taxon>
        <taxon>Enterobacterales</taxon>
        <taxon>Enterobacteriaceae</taxon>
        <taxon>Escherichia</taxon>
    </lineage>
</organism>
<evidence type="ECO:0000255" key="1">
    <source>
        <dbReference type="HAMAP-Rule" id="MF_01003"/>
    </source>
</evidence>
<feature type="chain" id="PRO_1000062756" description="Probable ECA polymerase">
    <location>
        <begin position="1"/>
        <end position="450"/>
    </location>
</feature>
<feature type="transmembrane region" description="Helical" evidence="1">
    <location>
        <begin position="6"/>
        <end position="26"/>
    </location>
</feature>
<feature type="transmembrane region" description="Helical" evidence="1">
    <location>
        <begin position="37"/>
        <end position="57"/>
    </location>
</feature>
<feature type="transmembrane region" description="Helical" evidence="1">
    <location>
        <begin position="63"/>
        <end position="83"/>
    </location>
</feature>
<feature type="transmembrane region" description="Helical" evidence="1">
    <location>
        <begin position="118"/>
        <end position="138"/>
    </location>
</feature>
<feature type="transmembrane region" description="Helical" evidence="1">
    <location>
        <begin position="155"/>
        <end position="175"/>
    </location>
</feature>
<feature type="transmembrane region" description="Helical" evidence="1">
    <location>
        <begin position="181"/>
        <end position="201"/>
    </location>
</feature>
<feature type="transmembrane region" description="Helical" evidence="1">
    <location>
        <begin position="207"/>
        <end position="227"/>
    </location>
</feature>
<feature type="transmembrane region" description="Helical" evidence="1">
    <location>
        <begin position="228"/>
        <end position="248"/>
    </location>
</feature>
<feature type="transmembrane region" description="Helical" evidence="1">
    <location>
        <begin position="341"/>
        <end position="361"/>
    </location>
</feature>
<feature type="transmembrane region" description="Helical" evidence="1">
    <location>
        <begin position="378"/>
        <end position="398"/>
    </location>
</feature>
<feature type="transmembrane region" description="Helical" evidence="1">
    <location>
        <begin position="410"/>
        <end position="430"/>
    </location>
</feature>
<accession>A7ZTZ7</accession>
<reference key="1">
    <citation type="journal article" date="2008" name="J. Bacteriol.">
        <title>The pangenome structure of Escherichia coli: comparative genomic analysis of E. coli commensal and pathogenic isolates.</title>
        <authorList>
            <person name="Rasko D.A."/>
            <person name="Rosovitz M.J."/>
            <person name="Myers G.S.A."/>
            <person name="Mongodin E.F."/>
            <person name="Fricke W.F."/>
            <person name="Gajer P."/>
            <person name="Crabtree J."/>
            <person name="Sebaihia M."/>
            <person name="Thomson N.R."/>
            <person name="Chaudhuri R."/>
            <person name="Henderson I.R."/>
            <person name="Sperandio V."/>
            <person name="Ravel J."/>
        </authorList>
    </citation>
    <scope>NUCLEOTIDE SEQUENCE [LARGE SCALE GENOMIC DNA]</scope>
    <source>
        <strain>E24377A / ETEC</strain>
    </source>
</reference>
<sequence length="450" mass="51521">MSLLQFSGLFVVWLLCTLFIATLTWFEFRRVRFNFNVFFSLLFLLTFFFGFPLTSVLVFRFDVGVAPPEILLQALLSAGCFYAVYYVTYKTRLRKRVADVPRRPLFTMNRVETNLTWVILMGIALVSVGIFFMHNGFLLFRLNSYSQIFSSEVSGVALKRFFYFFIPAMLVVYFLRQDSKAWLFFLVSTVAFGLLTYMIVGGTRANIIIAFAIFLFIGIIRGWISLWMLAAAGVLGIVGMFWLALKRYGMNVSGDEAFYTFLYLTRDTFSPWENLALLLQNYDNIDFQGLAPIVRDFYVFIPSWLWPGRPSMVLNSANYFTWEVLNNHSGLAISPTLIGSLVVMGGALFIPLGAIVVGLIIKWFDWLYELGNRETNRYKAAILHSFCFGAIFNMIVLAREGLDSFVSRVVFFIVVFGACLMIAKLLYWLFESAGLIHKRTKSSLRTQVEG</sequence>
<dbReference type="EMBL" id="CP000800">
    <property type="protein sequence ID" value="ABV18793.1"/>
    <property type="molecule type" value="Genomic_DNA"/>
</dbReference>
<dbReference type="RefSeq" id="WP_000055132.1">
    <property type="nucleotide sequence ID" value="NC_009801.1"/>
</dbReference>
<dbReference type="GeneID" id="75204784"/>
<dbReference type="KEGG" id="ecw:EcE24377A_4306"/>
<dbReference type="HOGENOM" id="CLU_049711_0_0_6"/>
<dbReference type="UniPathway" id="UPA00566"/>
<dbReference type="Proteomes" id="UP000001122">
    <property type="component" value="Chromosome"/>
</dbReference>
<dbReference type="GO" id="GO:0005886">
    <property type="term" value="C:plasma membrane"/>
    <property type="evidence" value="ECO:0007669"/>
    <property type="project" value="UniProtKB-SubCell"/>
</dbReference>
<dbReference type="GO" id="GO:0009246">
    <property type="term" value="P:enterobacterial common antigen biosynthetic process"/>
    <property type="evidence" value="ECO:0007669"/>
    <property type="project" value="UniProtKB-UniRule"/>
</dbReference>
<dbReference type="HAMAP" id="MF_01003">
    <property type="entry name" value="WzyE"/>
    <property type="match status" value="1"/>
</dbReference>
<dbReference type="InterPro" id="IPR010691">
    <property type="entry name" value="WzyE"/>
</dbReference>
<dbReference type="NCBIfam" id="NF002820">
    <property type="entry name" value="PRK02975.1"/>
    <property type="match status" value="1"/>
</dbReference>
<dbReference type="Pfam" id="PF06899">
    <property type="entry name" value="WzyE"/>
    <property type="match status" value="1"/>
</dbReference>
<protein>
    <recommendedName>
        <fullName evidence="1">Probable ECA polymerase</fullName>
    </recommendedName>
</protein>
<keyword id="KW-0997">Cell inner membrane</keyword>
<keyword id="KW-1003">Cell membrane</keyword>
<keyword id="KW-0472">Membrane</keyword>
<keyword id="KW-1185">Reference proteome</keyword>
<keyword id="KW-0812">Transmembrane</keyword>
<keyword id="KW-1133">Transmembrane helix</keyword>
<gene>
    <name evidence="1" type="primary">wzyE</name>
    <name type="ordered locus">EcE24377A_4306</name>
</gene>
<comment type="function">
    <text evidence="1">Probably involved in the polymerization of enterobacterial common antigen (ECA) trisaccharide repeat units.</text>
</comment>
<comment type="pathway">
    <text evidence="1">Bacterial outer membrane biogenesis; enterobacterial common antigen biosynthesis.</text>
</comment>
<comment type="subunit">
    <text evidence="1">Probably part of a complex composed of WzxE, WzyE and WzzE.</text>
</comment>
<comment type="subcellular location">
    <subcellularLocation>
        <location evidence="1">Cell inner membrane</location>
        <topology evidence="1">Multi-pass membrane protein</topology>
    </subcellularLocation>
</comment>
<comment type="similarity">
    <text evidence="1">Belongs to the WzyE family.</text>
</comment>
<proteinExistence type="inferred from homology"/>